<reference key="1">
    <citation type="journal article" date="2006" name="Proc. Natl. Acad. Sci. U.S.A.">
        <title>Molecular genetic anatomy of inter- and intraserotype variation in the human bacterial pathogen group A Streptococcus.</title>
        <authorList>
            <person name="Beres S.B."/>
            <person name="Richter E.W."/>
            <person name="Nagiec M.J."/>
            <person name="Sumby P."/>
            <person name="Porcella S.F."/>
            <person name="DeLeo F.R."/>
            <person name="Musser J.M."/>
        </authorList>
    </citation>
    <scope>NUCLEOTIDE SEQUENCE [LARGE SCALE GENOMIC DNA]</scope>
    <source>
        <strain>MGAS10270</strain>
    </source>
</reference>
<sequence>MLTKIGLYTGSFDPVTNGHLDIVKRASGLFDQIYVGIFDNPTKKSYFKLEVRKAMLTQALADFTNVIVVTSHERLAIDVAKELRVTHLIRGLRNATDFEYEENLEYFNHLLAPNIETVYLISRNKWQALSSSRVRELIHFQSSLEDLVPQSVIAQVEKMNEKT</sequence>
<comment type="function">
    <text evidence="1">Reversibly transfers an adenylyl group from ATP to 4'-phosphopantetheine, yielding dephospho-CoA (dPCoA) and pyrophosphate.</text>
</comment>
<comment type="catalytic activity">
    <reaction evidence="1">
        <text>(R)-4'-phosphopantetheine + ATP + H(+) = 3'-dephospho-CoA + diphosphate</text>
        <dbReference type="Rhea" id="RHEA:19801"/>
        <dbReference type="ChEBI" id="CHEBI:15378"/>
        <dbReference type="ChEBI" id="CHEBI:30616"/>
        <dbReference type="ChEBI" id="CHEBI:33019"/>
        <dbReference type="ChEBI" id="CHEBI:57328"/>
        <dbReference type="ChEBI" id="CHEBI:61723"/>
        <dbReference type="EC" id="2.7.7.3"/>
    </reaction>
</comment>
<comment type="cofactor">
    <cofactor evidence="1">
        <name>Mg(2+)</name>
        <dbReference type="ChEBI" id="CHEBI:18420"/>
    </cofactor>
</comment>
<comment type="pathway">
    <text evidence="1">Cofactor biosynthesis; coenzyme A biosynthesis; CoA from (R)-pantothenate: step 4/5.</text>
</comment>
<comment type="subunit">
    <text evidence="1">Homohexamer.</text>
</comment>
<comment type="subcellular location">
    <subcellularLocation>
        <location evidence="1">Cytoplasm</location>
    </subcellularLocation>
</comment>
<comment type="similarity">
    <text evidence="1">Belongs to the bacterial CoaD family.</text>
</comment>
<keyword id="KW-0067">ATP-binding</keyword>
<keyword id="KW-0173">Coenzyme A biosynthesis</keyword>
<keyword id="KW-0963">Cytoplasm</keyword>
<keyword id="KW-0460">Magnesium</keyword>
<keyword id="KW-0547">Nucleotide-binding</keyword>
<keyword id="KW-0548">Nucleotidyltransferase</keyword>
<keyword id="KW-0808">Transferase</keyword>
<protein>
    <recommendedName>
        <fullName evidence="1">Phosphopantetheine adenylyltransferase</fullName>
        <ecNumber evidence="1">2.7.7.3</ecNumber>
    </recommendedName>
    <alternativeName>
        <fullName evidence="1">Dephospho-CoA pyrophosphorylase</fullName>
    </alternativeName>
    <alternativeName>
        <fullName evidence="1">Pantetheine-phosphate adenylyltransferase</fullName>
        <shortName evidence="1">PPAT</shortName>
    </alternativeName>
</protein>
<evidence type="ECO:0000255" key="1">
    <source>
        <dbReference type="HAMAP-Rule" id="MF_00151"/>
    </source>
</evidence>
<dbReference type="EC" id="2.7.7.3" evidence="1"/>
<dbReference type="EMBL" id="CP000260">
    <property type="protein sequence ID" value="ABF34347.1"/>
    <property type="molecule type" value="Genomic_DNA"/>
</dbReference>
<dbReference type="SMR" id="Q1JFZ7"/>
<dbReference type="KEGG" id="sph:MGAS10270_Spy1282"/>
<dbReference type="HOGENOM" id="CLU_100149_0_1_9"/>
<dbReference type="UniPathway" id="UPA00241">
    <property type="reaction ID" value="UER00355"/>
</dbReference>
<dbReference type="Proteomes" id="UP000002436">
    <property type="component" value="Chromosome"/>
</dbReference>
<dbReference type="GO" id="GO:0005737">
    <property type="term" value="C:cytoplasm"/>
    <property type="evidence" value="ECO:0007669"/>
    <property type="project" value="UniProtKB-SubCell"/>
</dbReference>
<dbReference type="GO" id="GO:0005524">
    <property type="term" value="F:ATP binding"/>
    <property type="evidence" value="ECO:0007669"/>
    <property type="project" value="UniProtKB-KW"/>
</dbReference>
<dbReference type="GO" id="GO:0004595">
    <property type="term" value="F:pantetheine-phosphate adenylyltransferase activity"/>
    <property type="evidence" value="ECO:0007669"/>
    <property type="project" value="UniProtKB-UniRule"/>
</dbReference>
<dbReference type="GO" id="GO:0015937">
    <property type="term" value="P:coenzyme A biosynthetic process"/>
    <property type="evidence" value="ECO:0007669"/>
    <property type="project" value="UniProtKB-UniRule"/>
</dbReference>
<dbReference type="CDD" id="cd02163">
    <property type="entry name" value="PPAT"/>
    <property type="match status" value="1"/>
</dbReference>
<dbReference type="Gene3D" id="3.40.50.620">
    <property type="entry name" value="HUPs"/>
    <property type="match status" value="1"/>
</dbReference>
<dbReference type="HAMAP" id="MF_00151">
    <property type="entry name" value="PPAT_bact"/>
    <property type="match status" value="1"/>
</dbReference>
<dbReference type="InterPro" id="IPR004821">
    <property type="entry name" value="Cyt_trans-like"/>
</dbReference>
<dbReference type="InterPro" id="IPR001980">
    <property type="entry name" value="PPAT"/>
</dbReference>
<dbReference type="InterPro" id="IPR014729">
    <property type="entry name" value="Rossmann-like_a/b/a_fold"/>
</dbReference>
<dbReference type="NCBIfam" id="TIGR01510">
    <property type="entry name" value="coaD_prev_kdtB"/>
    <property type="match status" value="1"/>
</dbReference>
<dbReference type="NCBIfam" id="TIGR00125">
    <property type="entry name" value="cyt_tran_rel"/>
    <property type="match status" value="1"/>
</dbReference>
<dbReference type="PANTHER" id="PTHR21342">
    <property type="entry name" value="PHOSPHOPANTETHEINE ADENYLYLTRANSFERASE"/>
    <property type="match status" value="1"/>
</dbReference>
<dbReference type="PANTHER" id="PTHR21342:SF1">
    <property type="entry name" value="PHOSPHOPANTETHEINE ADENYLYLTRANSFERASE"/>
    <property type="match status" value="1"/>
</dbReference>
<dbReference type="Pfam" id="PF01467">
    <property type="entry name" value="CTP_transf_like"/>
    <property type="match status" value="1"/>
</dbReference>
<dbReference type="PRINTS" id="PR01020">
    <property type="entry name" value="LPSBIOSNTHSS"/>
</dbReference>
<dbReference type="SUPFAM" id="SSF52374">
    <property type="entry name" value="Nucleotidylyl transferase"/>
    <property type="match status" value="1"/>
</dbReference>
<accession>Q1JFZ7</accession>
<feature type="chain" id="PRO_1000011253" description="Phosphopantetheine adenylyltransferase">
    <location>
        <begin position="1"/>
        <end position="163"/>
    </location>
</feature>
<feature type="binding site" evidence="1">
    <location>
        <begin position="11"/>
        <end position="12"/>
    </location>
    <ligand>
        <name>ATP</name>
        <dbReference type="ChEBI" id="CHEBI:30616"/>
    </ligand>
</feature>
<feature type="binding site" evidence="1">
    <location>
        <position position="11"/>
    </location>
    <ligand>
        <name>substrate</name>
    </ligand>
</feature>
<feature type="binding site" evidence="1">
    <location>
        <position position="19"/>
    </location>
    <ligand>
        <name>ATP</name>
        <dbReference type="ChEBI" id="CHEBI:30616"/>
    </ligand>
</feature>
<feature type="binding site" evidence="1">
    <location>
        <position position="43"/>
    </location>
    <ligand>
        <name>substrate</name>
    </ligand>
</feature>
<feature type="binding site" evidence="1">
    <location>
        <position position="76"/>
    </location>
    <ligand>
        <name>substrate</name>
    </ligand>
</feature>
<feature type="binding site" evidence="1">
    <location>
        <position position="90"/>
    </location>
    <ligand>
        <name>substrate</name>
    </ligand>
</feature>
<feature type="binding site" evidence="1">
    <location>
        <begin position="91"/>
        <end position="93"/>
    </location>
    <ligand>
        <name>ATP</name>
        <dbReference type="ChEBI" id="CHEBI:30616"/>
    </ligand>
</feature>
<feature type="binding site" evidence="1">
    <location>
        <position position="101"/>
    </location>
    <ligand>
        <name>ATP</name>
        <dbReference type="ChEBI" id="CHEBI:30616"/>
    </ligand>
</feature>
<feature type="binding site" evidence="1">
    <location>
        <begin position="126"/>
        <end position="132"/>
    </location>
    <ligand>
        <name>ATP</name>
        <dbReference type="ChEBI" id="CHEBI:30616"/>
    </ligand>
</feature>
<feature type="site" description="Transition state stabilizer" evidence="1">
    <location>
        <position position="19"/>
    </location>
</feature>
<proteinExistence type="inferred from homology"/>
<name>COAD_STRPD</name>
<organism>
    <name type="scientific">Streptococcus pyogenes serotype M2 (strain MGAS10270)</name>
    <dbReference type="NCBI Taxonomy" id="370552"/>
    <lineage>
        <taxon>Bacteria</taxon>
        <taxon>Bacillati</taxon>
        <taxon>Bacillota</taxon>
        <taxon>Bacilli</taxon>
        <taxon>Lactobacillales</taxon>
        <taxon>Streptococcaceae</taxon>
        <taxon>Streptococcus</taxon>
    </lineage>
</organism>
<gene>
    <name evidence="1" type="primary">coaD</name>
    <name type="ordered locus">MGAS10270_Spy1282</name>
</gene>